<feature type="chain" id="PRO_0000116861" description="Cytochrome b translation regulator cbp7">
    <location>
        <begin position="1"/>
        <end position="356"/>
    </location>
</feature>
<comment type="function">
    <text evidence="1">Translation factor for cob1/cytochrome b; plays a role in cob1 mRNA stabilization and required for correct folding of the protein.</text>
</comment>
<comment type="subunit">
    <text evidence="1">Component of a complex, at least composed of cbp7 and cbp8.</text>
</comment>
<comment type="subcellular location">
    <subcellularLocation>
        <location evidence="1">Mitochondrion</location>
    </subcellularLocation>
</comment>
<comment type="disruption phenotype">
    <text evidence="1">Decreases mitochondrial respiratory chain complex III assembly (PubMed:34634819). Decreases RNA level of cytochrome b cob1 and may lead to abnormal folding of cob1 protein (PubMed:34634819). Abolishes growth on the non-fermentable carbon source galactose (PubMed:34634819).</text>
</comment>
<reference key="1">
    <citation type="journal article" date="2002" name="Nature">
        <title>The genome sequence of Schizosaccharomyces pombe.</title>
        <authorList>
            <person name="Wood V."/>
            <person name="Gwilliam R."/>
            <person name="Rajandream M.A."/>
            <person name="Lyne M.H."/>
            <person name="Lyne R."/>
            <person name="Stewart A."/>
            <person name="Sgouros J.G."/>
            <person name="Peat N."/>
            <person name="Hayles J."/>
            <person name="Baker S.G."/>
            <person name="Basham D."/>
            <person name="Bowman S."/>
            <person name="Brooks K."/>
            <person name="Brown D."/>
            <person name="Brown S."/>
            <person name="Chillingworth T."/>
            <person name="Churcher C.M."/>
            <person name="Collins M."/>
            <person name="Connor R."/>
            <person name="Cronin A."/>
            <person name="Davis P."/>
            <person name="Feltwell T."/>
            <person name="Fraser A."/>
            <person name="Gentles S."/>
            <person name="Goble A."/>
            <person name="Hamlin N."/>
            <person name="Harris D.E."/>
            <person name="Hidalgo J."/>
            <person name="Hodgson G."/>
            <person name="Holroyd S."/>
            <person name="Hornsby T."/>
            <person name="Howarth S."/>
            <person name="Huckle E.J."/>
            <person name="Hunt S."/>
            <person name="Jagels K."/>
            <person name="James K.D."/>
            <person name="Jones L."/>
            <person name="Jones M."/>
            <person name="Leather S."/>
            <person name="McDonald S."/>
            <person name="McLean J."/>
            <person name="Mooney P."/>
            <person name="Moule S."/>
            <person name="Mungall K.L."/>
            <person name="Murphy L.D."/>
            <person name="Niblett D."/>
            <person name="Odell C."/>
            <person name="Oliver K."/>
            <person name="O'Neil S."/>
            <person name="Pearson D."/>
            <person name="Quail M.A."/>
            <person name="Rabbinowitsch E."/>
            <person name="Rutherford K.M."/>
            <person name="Rutter S."/>
            <person name="Saunders D."/>
            <person name="Seeger K."/>
            <person name="Sharp S."/>
            <person name="Skelton J."/>
            <person name="Simmonds M.N."/>
            <person name="Squares R."/>
            <person name="Squares S."/>
            <person name="Stevens K."/>
            <person name="Taylor K."/>
            <person name="Taylor R.G."/>
            <person name="Tivey A."/>
            <person name="Walsh S.V."/>
            <person name="Warren T."/>
            <person name="Whitehead S."/>
            <person name="Woodward J.R."/>
            <person name="Volckaert G."/>
            <person name="Aert R."/>
            <person name="Robben J."/>
            <person name="Grymonprez B."/>
            <person name="Weltjens I."/>
            <person name="Vanstreels E."/>
            <person name="Rieger M."/>
            <person name="Schaefer M."/>
            <person name="Mueller-Auer S."/>
            <person name="Gabel C."/>
            <person name="Fuchs M."/>
            <person name="Duesterhoeft A."/>
            <person name="Fritzc C."/>
            <person name="Holzer E."/>
            <person name="Moestl D."/>
            <person name="Hilbert H."/>
            <person name="Borzym K."/>
            <person name="Langer I."/>
            <person name="Beck A."/>
            <person name="Lehrach H."/>
            <person name="Reinhardt R."/>
            <person name="Pohl T.M."/>
            <person name="Eger P."/>
            <person name="Zimmermann W."/>
            <person name="Wedler H."/>
            <person name="Wambutt R."/>
            <person name="Purnelle B."/>
            <person name="Goffeau A."/>
            <person name="Cadieu E."/>
            <person name="Dreano S."/>
            <person name="Gloux S."/>
            <person name="Lelaure V."/>
            <person name="Mottier S."/>
            <person name="Galibert F."/>
            <person name="Aves S.J."/>
            <person name="Xiang Z."/>
            <person name="Hunt C."/>
            <person name="Moore K."/>
            <person name="Hurst S.M."/>
            <person name="Lucas M."/>
            <person name="Rochet M."/>
            <person name="Gaillardin C."/>
            <person name="Tallada V.A."/>
            <person name="Garzon A."/>
            <person name="Thode G."/>
            <person name="Daga R.R."/>
            <person name="Cruzado L."/>
            <person name="Jimenez J."/>
            <person name="Sanchez M."/>
            <person name="del Rey F."/>
            <person name="Benito J."/>
            <person name="Dominguez A."/>
            <person name="Revuelta J.L."/>
            <person name="Moreno S."/>
            <person name="Armstrong J."/>
            <person name="Forsburg S.L."/>
            <person name="Cerutti L."/>
            <person name="Lowe T."/>
            <person name="McCombie W.R."/>
            <person name="Paulsen I."/>
            <person name="Potashkin J."/>
            <person name="Shpakovski G.V."/>
            <person name="Ussery D."/>
            <person name="Barrell B.G."/>
            <person name="Nurse P."/>
        </authorList>
    </citation>
    <scope>NUCLEOTIDE SEQUENCE [LARGE SCALE GENOMIC DNA]</scope>
    <source>
        <strain>972 / ATCC 24843</strain>
    </source>
</reference>
<reference key="2">
    <citation type="journal article" date="2021" name="Nucleic Acids Res.">
        <title>Translational activators and mitoribosomal isoforms cooperate to mediate mRNA-specific translation in Schizosaccharomyces pombe mitochondria.</title>
        <authorList>
            <person name="Herbert C.J."/>
            <person name="Labarre-Mariotte S."/>
            <person name="Cornu D."/>
            <person name="Sophie C."/>
            <person name="Panozzo C."/>
            <person name="Michel T."/>
            <person name="Dujardin G."/>
            <person name="Bonnefoy N."/>
        </authorList>
    </citation>
    <scope>FUNCTION</scope>
    <scope>IDENTIFICATION IN A COMPLEX WITH CBP8</scope>
    <scope>SUBCELLULAR LOCATION</scope>
    <scope>DISRUPTION PHENOTYPE</scope>
</reference>
<gene>
    <name evidence="2" type="primary">cbp7</name>
    <name type="ORF">SPBC28E12.04</name>
</gene>
<accession>O74361</accession>
<sequence length="356" mass="41275">MADVIKRCILGPTEAGWFVAKSQIKKPVDQRPVILTHCKLHSKMLEPKAIVYKKNSSAIPKRVDNILLRSQKPKHIECLLVDSKITKTRSLLKRFGSCLDETSTIVLLNQSVSLWEDCYSLFPKTETRPRIYLGRFQTLFKSFPFNLISDSFSYRLNLSKLPRTPLEKCTVARACKQFPLNQRSPLLDLMGSFERDYVNFSNFSQMLSAQLCDSMAFLIQIFPTPLLRQKAANAWIEVLSKLPYFHILDKSFFSPHLLLQSSENQACKFFNIGPQVYFDPRERLLHVKELLKFALKHIDSNDSLFTFLKQTCYTCDSPYAKVFQPDKQSFHSIISRKRLAHLEKEYFDKDVSKLVL</sequence>
<name>CBP7_SCHPO</name>
<protein>
    <recommendedName>
        <fullName evidence="2">Cytochrome b translation regulator cbp7</fullName>
    </recommendedName>
</protein>
<evidence type="ECO:0000269" key="1">
    <source>
    </source>
</evidence>
<evidence type="ECO:0000312" key="2">
    <source>
        <dbReference type="PomBase" id="SPBC28E12.04"/>
    </source>
</evidence>
<proteinExistence type="evidence at protein level"/>
<organism>
    <name type="scientific">Schizosaccharomyces pombe (strain 972 / ATCC 24843)</name>
    <name type="common">Fission yeast</name>
    <dbReference type="NCBI Taxonomy" id="284812"/>
    <lineage>
        <taxon>Eukaryota</taxon>
        <taxon>Fungi</taxon>
        <taxon>Dikarya</taxon>
        <taxon>Ascomycota</taxon>
        <taxon>Taphrinomycotina</taxon>
        <taxon>Schizosaccharomycetes</taxon>
        <taxon>Schizosaccharomycetales</taxon>
        <taxon>Schizosaccharomycetaceae</taxon>
        <taxon>Schizosaccharomyces</taxon>
    </lineage>
</organism>
<keyword id="KW-0496">Mitochondrion</keyword>
<keyword id="KW-1185">Reference proteome</keyword>
<keyword id="KW-0810">Translation regulation</keyword>
<dbReference type="EMBL" id="CU329671">
    <property type="protein sequence ID" value="CAA20651.1"/>
    <property type="molecule type" value="Genomic_DNA"/>
</dbReference>
<dbReference type="PIR" id="T40041">
    <property type="entry name" value="T40041"/>
</dbReference>
<dbReference type="RefSeq" id="NP_595757.1">
    <property type="nucleotide sequence ID" value="NM_001021657.2"/>
</dbReference>
<dbReference type="BioGRID" id="277019">
    <property type="interactions" value="66"/>
</dbReference>
<dbReference type="STRING" id="284812.O74361"/>
<dbReference type="PaxDb" id="4896-SPBC28E12.04.1"/>
<dbReference type="EnsemblFungi" id="SPBC28E12.04.1">
    <property type="protein sequence ID" value="SPBC28E12.04.1:pep"/>
    <property type="gene ID" value="SPBC28E12.04"/>
</dbReference>
<dbReference type="GeneID" id="2540491"/>
<dbReference type="KEGG" id="spo:2540491"/>
<dbReference type="PomBase" id="SPBC28E12.04">
    <property type="gene designation" value="cbp7"/>
</dbReference>
<dbReference type="VEuPathDB" id="FungiDB:SPBC28E12.04"/>
<dbReference type="HOGENOM" id="CLU_799636_0_0_1"/>
<dbReference type="InParanoid" id="O74361"/>
<dbReference type="OMA" id="DISLWME"/>
<dbReference type="PRO" id="PR:O74361"/>
<dbReference type="Proteomes" id="UP000002485">
    <property type="component" value="Chromosome II"/>
</dbReference>
<dbReference type="GO" id="GO:0005737">
    <property type="term" value="C:cytoplasm"/>
    <property type="evidence" value="ECO:0007005"/>
    <property type="project" value="PomBase"/>
</dbReference>
<dbReference type="GO" id="GO:0005743">
    <property type="term" value="C:mitochondrial inner membrane"/>
    <property type="evidence" value="ECO:0000266"/>
    <property type="project" value="PomBase"/>
</dbReference>
<dbReference type="GO" id="GO:0005739">
    <property type="term" value="C:mitochondrion"/>
    <property type="evidence" value="ECO:0000314"/>
    <property type="project" value="UniProtKB"/>
</dbReference>
<dbReference type="GO" id="GO:0008494">
    <property type="term" value="F:translation activator activity"/>
    <property type="evidence" value="ECO:0000303"/>
    <property type="project" value="PomBase"/>
</dbReference>
<dbReference type="GO" id="GO:0045182">
    <property type="term" value="F:translation regulator activity"/>
    <property type="evidence" value="ECO:0000315"/>
    <property type="project" value="UniProtKB"/>
</dbReference>
<dbReference type="GO" id="GO:0070124">
    <property type="term" value="P:mitochondrial translational initiation"/>
    <property type="evidence" value="ECO:0000315"/>
    <property type="project" value="UniProtKB"/>
</dbReference>